<reference key="1">
    <citation type="journal article" date="1992" name="J. Bacteriol.">
        <title>Genetics of xanthan production in Xanthomonas campestris: the xanA and xanB genes are involved in UDP-glucose and GDP-mannose biosynthesis.</title>
        <authorList>
            <person name="Koeplin R."/>
            <person name="Arnold W."/>
            <person name="Hoette B."/>
            <person name="Simon R."/>
            <person name="Wang G."/>
            <person name="Puehler A."/>
        </authorList>
    </citation>
    <scope>NUCLEOTIDE SEQUENCE [GENOMIC DNA]</scope>
</reference>
<reference key="2">
    <citation type="journal article" date="2008" name="J. Biotechnol.">
        <title>The genome of Xanthomonas campestris pv. campestris B100 and its use for the reconstruction of metabolic pathways involved in xanthan biosynthesis.</title>
        <authorList>
            <person name="Vorhoelter F.-J."/>
            <person name="Schneiker S."/>
            <person name="Goesmann A."/>
            <person name="Krause L."/>
            <person name="Bekel T."/>
            <person name="Kaiser O."/>
            <person name="Linke B."/>
            <person name="Patschkowski T."/>
            <person name="Rueckert C."/>
            <person name="Schmid J."/>
            <person name="Sidhu V.K."/>
            <person name="Sieber V."/>
            <person name="Tauch A."/>
            <person name="Watt S.A."/>
            <person name="Weisshaar B."/>
            <person name="Becker A."/>
            <person name="Niehaus K."/>
            <person name="Puehler A."/>
        </authorList>
    </citation>
    <scope>NUCLEOTIDE SEQUENCE [LARGE SCALE GENOMIC DNA]</scope>
    <source>
        <strain>B100</strain>
    </source>
</reference>
<feature type="chain" id="PRO_0000333186" description="Phosphohexose mutases">
    <location>
        <begin position="1"/>
        <end position="448"/>
    </location>
</feature>
<feature type="active site" description="Phosphoserine intermediate" evidence="1">
    <location>
        <position position="97"/>
    </location>
</feature>
<feature type="binding site" description="via phosphate group" evidence="1">
    <location>
        <position position="97"/>
    </location>
    <ligand>
        <name>Mg(2+)</name>
        <dbReference type="ChEBI" id="CHEBI:18420"/>
    </ligand>
</feature>
<feature type="binding site" evidence="1">
    <location>
        <position position="237"/>
    </location>
    <ligand>
        <name>Mg(2+)</name>
        <dbReference type="ChEBI" id="CHEBI:18420"/>
    </ligand>
</feature>
<feature type="binding site" evidence="1">
    <location>
        <position position="239"/>
    </location>
    <ligand>
        <name>Mg(2+)</name>
        <dbReference type="ChEBI" id="CHEBI:18420"/>
    </ligand>
</feature>
<feature type="binding site" evidence="1">
    <location>
        <position position="241"/>
    </location>
    <ligand>
        <name>Mg(2+)</name>
        <dbReference type="ChEBI" id="CHEBI:18420"/>
    </ligand>
</feature>
<proteinExistence type="inferred from homology"/>
<sequence>MTLPAFKAYDIRGRVPDELNEDLARRIGVALAAQLDQGPVVLGHDVRLASPALQEALSAGLRASGREVIDIGLCGTEEVYFQTDHLKAAGGVMVTASHNPMDYNGMKLVREQARPISSDTGLFAIRDTVAADTAAAGEPTAAEHSRTDKTAYLEHLLSYVDRSTLKPLKLVVNAGNGGAGLIVDLLAPHLPFEFVRVFHEPDGNFPNGIPNPLLQENRDATAKAVKEHGADFGIAWDGDFDRCFFFDHTGRFIEGYYLVGLLAQAILAKQPGGKVVHDPRLTWNTVEMVEDAGGIPVLCKSGHAFIKEKMRSENAVYGGEMSAHHYFREFAYADSGMIPWLLIAELVSQSGRSLADLVEARMQKFPCSGEINFKVDDAKAAVARVMAHYGDQSPELDYTDGISADFGQWRFNLRSSNTEPLLRLNVETRGDAALLETRTQEISNLLRG</sequence>
<organism>
    <name type="scientific">Xanthomonas campestris pv. campestris (strain B100)</name>
    <dbReference type="NCBI Taxonomy" id="509169"/>
    <lineage>
        <taxon>Bacteria</taxon>
        <taxon>Pseudomonadati</taxon>
        <taxon>Pseudomonadota</taxon>
        <taxon>Gammaproteobacteria</taxon>
        <taxon>Lysobacterales</taxon>
        <taxon>Lysobacteraceae</taxon>
        <taxon>Xanthomonas</taxon>
    </lineage>
</organism>
<comment type="function">
    <text>Involved in xanthan production.</text>
</comment>
<comment type="catalytic activity">
    <reaction>
        <text>alpha-D-glucose 1-phosphate = alpha-D-glucose 6-phosphate</text>
        <dbReference type="Rhea" id="RHEA:23536"/>
        <dbReference type="ChEBI" id="CHEBI:58225"/>
        <dbReference type="ChEBI" id="CHEBI:58601"/>
        <dbReference type="EC" id="5.4.2.2"/>
    </reaction>
</comment>
<comment type="catalytic activity">
    <reaction>
        <text>alpha-D-mannose 1-phosphate = D-mannose 6-phosphate</text>
        <dbReference type="Rhea" id="RHEA:11140"/>
        <dbReference type="ChEBI" id="CHEBI:58409"/>
        <dbReference type="ChEBI" id="CHEBI:58735"/>
        <dbReference type="EC" id="5.4.2.8"/>
    </reaction>
</comment>
<comment type="cofactor">
    <cofactor evidence="1">
        <name>Mg(2+)</name>
        <dbReference type="ChEBI" id="CHEBI:18420"/>
    </cofactor>
    <text evidence="1">Binds 1 Mg(2+) ion per subunit.</text>
</comment>
<comment type="pathway">
    <text>Nucleotide-sugar biosynthesis; GDP-alpha-D-mannose biosynthesis; alpha-D-mannose 1-phosphate from D-fructose 6-phosphate: step 2/2.</text>
</comment>
<comment type="similarity">
    <text evidence="2">Belongs to the phosphohexose mutase family.</text>
</comment>
<protein>
    <recommendedName>
        <fullName>Phosphohexose mutases</fullName>
    </recommendedName>
    <domain>
        <recommendedName>
            <fullName>Phosphoglucomutase</fullName>
            <shortName>PGM</shortName>
            <ecNumber>5.4.2.2</ecNumber>
        </recommendedName>
        <alternativeName>
            <fullName>Glucose phosphomutase</fullName>
        </alternativeName>
    </domain>
    <domain>
        <recommendedName>
            <fullName>Phosphomannomutase</fullName>
            <shortName>PMM</shortName>
            <ecNumber>5.4.2.8</ecNumber>
        </recommendedName>
    </domain>
</protein>
<gene>
    <name type="primary">xanA</name>
    <name type="ordered locus">xcc-b100_3729</name>
</gene>
<dbReference type="EC" id="5.4.2.2"/>
<dbReference type="EC" id="5.4.2.8"/>
<dbReference type="EMBL" id="AF204145">
    <property type="protein sequence ID" value="AAA27610.1"/>
    <property type="molecule type" value="Genomic_DNA"/>
</dbReference>
<dbReference type="EMBL" id="AM920689">
    <property type="protein sequence ID" value="CAP53096.1"/>
    <property type="molecule type" value="Genomic_DNA"/>
</dbReference>
<dbReference type="PIR" id="A43304">
    <property type="entry name" value="A43304"/>
</dbReference>
<dbReference type="SMR" id="B0RVK5"/>
<dbReference type="KEGG" id="xca:xcc-b100_3729"/>
<dbReference type="HOGENOM" id="CLU_016950_9_2_6"/>
<dbReference type="UniPathway" id="UPA00126">
    <property type="reaction ID" value="UER00424"/>
</dbReference>
<dbReference type="Proteomes" id="UP000001188">
    <property type="component" value="Chromosome"/>
</dbReference>
<dbReference type="GO" id="GO:0000287">
    <property type="term" value="F:magnesium ion binding"/>
    <property type="evidence" value="ECO:0007669"/>
    <property type="project" value="InterPro"/>
</dbReference>
<dbReference type="GO" id="GO:0004614">
    <property type="term" value="F:phosphoglucomutase activity"/>
    <property type="evidence" value="ECO:0007669"/>
    <property type="project" value="UniProtKB-EC"/>
</dbReference>
<dbReference type="GO" id="GO:0004615">
    <property type="term" value="F:phosphomannomutase activity"/>
    <property type="evidence" value="ECO:0007669"/>
    <property type="project" value="UniProtKB-EC"/>
</dbReference>
<dbReference type="GO" id="GO:0009298">
    <property type="term" value="P:GDP-mannose biosynthetic process"/>
    <property type="evidence" value="ECO:0007669"/>
    <property type="project" value="UniProtKB-UniPathway"/>
</dbReference>
<dbReference type="GO" id="GO:0009103">
    <property type="term" value="P:lipopolysaccharide biosynthetic process"/>
    <property type="evidence" value="ECO:0007669"/>
    <property type="project" value="UniProtKB-KW"/>
</dbReference>
<dbReference type="CDD" id="cd03089">
    <property type="entry name" value="PMM_PGM"/>
    <property type="match status" value="1"/>
</dbReference>
<dbReference type="Gene3D" id="3.40.120.10">
    <property type="entry name" value="Alpha-D-Glucose-1,6-Bisphosphate, subunit A, domain 3"/>
    <property type="match status" value="3"/>
</dbReference>
<dbReference type="Gene3D" id="3.30.310.50">
    <property type="entry name" value="Alpha-D-phosphohexomutase, C-terminal domain"/>
    <property type="match status" value="1"/>
</dbReference>
<dbReference type="InterPro" id="IPR005844">
    <property type="entry name" value="A-D-PHexomutase_a/b/a-I"/>
</dbReference>
<dbReference type="InterPro" id="IPR016055">
    <property type="entry name" value="A-D-PHexomutase_a/b/a-I/II/III"/>
</dbReference>
<dbReference type="InterPro" id="IPR005845">
    <property type="entry name" value="A-D-PHexomutase_a/b/a-II"/>
</dbReference>
<dbReference type="InterPro" id="IPR005846">
    <property type="entry name" value="A-D-PHexomutase_a/b/a-III"/>
</dbReference>
<dbReference type="InterPro" id="IPR005843">
    <property type="entry name" value="A-D-PHexomutase_C"/>
</dbReference>
<dbReference type="InterPro" id="IPR036900">
    <property type="entry name" value="A-D-PHexomutase_C_sf"/>
</dbReference>
<dbReference type="InterPro" id="IPR016066">
    <property type="entry name" value="A-D-PHexomutase_CS"/>
</dbReference>
<dbReference type="InterPro" id="IPR005841">
    <property type="entry name" value="Alpha-D-phosphohexomutase_SF"/>
</dbReference>
<dbReference type="PANTHER" id="PTHR43771">
    <property type="entry name" value="PHOSPHOMANNOMUTASE"/>
    <property type="match status" value="1"/>
</dbReference>
<dbReference type="PANTHER" id="PTHR43771:SF1">
    <property type="entry name" value="PHOSPHOMANNOMUTASE"/>
    <property type="match status" value="1"/>
</dbReference>
<dbReference type="Pfam" id="PF02878">
    <property type="entry name" value="PGM_PMM_I"/>
    <property type="match status" value="1"/>
</dbReference>
<dbReference type="Pfam" id="PF02879">
    <property type="entry name" value="PGM_PMM_II"/>
    <property type="match status" value="1"/>
</dbReference>
<dbReference type="Pfam" id="PF02880">
    <property type="entry name" value="PGM_PMM_III"/>
    <property type="match status" value="1"/>
</dbReference>
<dbReference type="Pfam" id="PF00408">
    <property type="entry name" value="PGM_PMM_IV"/>
    <property type="match status" value="1"/>
</dbReference>
<dbReference type="PRINTS" id="PR00509">
    <property type="entry name" value="PGMPMM"/>
</dbReference>
<dbReference type="SUPFAM" id="SSF55957">
    <property type="entry name" value="Phosphoglucomutase, C-terminal domain"/>
    <property type="match status" value="1"/>
</dbReference>
<dbReference type="SUPFAM" id="SSF53738">
    <property type="entry name" value="Phosphoglucomutase, first 3 domains"/>
    <property type="match status" value="3"/>
</dbReference>
<dbReference type="PROSITE" id="PS00710">
    <property type="entry name" value="PGM_PMM"/>
    <property type="match status" value="1"/>
</dbReference>
<evidence type="ECO:0000250" key="1"/>
<evidence type="ECO:0000305" key="2"/>
<accession>B0RVK5</accession>
<accession>P29955</accession>
<keyword id="KW-0270">Exopolysaccharide synthesis</keyword>
<keyword id="KW-0413">Isomerase</keyword>
<keyword id="KW-0448">Lipopolysaccharide biosynthesis</keyword>
<keyword id="KW-0460">Magnesium</keyword>
<keyword id="KW-0479">Metal-binding</keyword>
<keyword id="KW-0597">Phosphoprotein</keyword>
<name>XANA_XANCB</name>